<dbReference type="EMBL" id="AF294825">
    <property type="protein sequence ID" value="AAG22534.1"/>
    <property type="molecule type" value="mRNA"/>
</dbReference>
<dbReference type="EMBL" id="AK009514">
    <property type="protein sequence ID" value="BAB26332.1"/>
    <property type="molecule type" value="mRNA"/>
</dbReference>
<dbReference type="EMBL" id="BC069900">
    <property type="protein sequence ID" value="AAH69900.1"/>
    <property type="molecule type" value="mRNA"/>
</dbReference>
<dbReference type="RefSeq" id="NP_001152977.1">
    <property type="nucleotide sequence ID" value="NM_001159505.1"/>
</dbReference>
<dbReference type="RefSeq" id="NP_076006.2">
    <property type="nucleotide sequence ID" value="NM_023517.2"/>
</dbReference>
<dbReference type="PDB" id="1U5X">
    <property type="method" value="X-ray"/>
    <property type="resolution" value="1.80 A"/>
    <property type="chains" value="A=104-241"/>
</dbReference>
<dbReference type="PDB" id="1U5Y">
    <property type="method" value="X-ray"/>
    <property type="resolution" value="2.30 A"/>
    <property type="chains" value="A/B/D=104-241"/>
</dbReference>
<dbReference type="PDB" id="1U5Z">
    <property type="method" value="X-ray"/>
    <property type="resolution" value="2.40 A"/>
    <property type="chains" value="A=104-241"/>
</dbReference>
<dbReference type="PDB" id="1XU1">
    <property type="method" value="X-ray"/>
    <property type="resolution" value="1.90 A"/>
    <property type="chains" value="A/B/D=104-241"/>
</dbReference>
<dbReference type="PDB" id="1XU2">
    <property type="method" value="X-ray"/>
    <property type="resolution" value="2.35 A"/>
    <property type="chains" value="A/B/D=104-241"/>
</dbReference>
<dbReference type="PDB" id="3K48">
    <property type="method" value="X-ray"/>
    <property type="resolution" value="2.80 A"/>
    <property type="chains" value="A/B/D=104-241"/>
</dbReference>
<dbReference type="PDBsum" id="1U5X"/>
<dbReference type="PDBsum" id="1U5Y"/>
<dbReference type="PDBsum" id="1U5Z"/>
<dbReference type="PDBsum" id="1XU1"/>
<dbReference type="PDBsum" id="1XU2"/>
<dbReference type="PDBsum" id="3K48"/>
<dbReference type="SMR" id="Q9D777"/>
<dbReference type="FunCoup" id="Q9D777">
    <property type="interactions" value="322"/>
</dbReference>
<dbReference type="IntAct" id="Q9D777">
    <property type="interactions" value="2"/>
</dbReference>
<dbReference type="STRING" id="10090.ENSMUSP00000018896"/>
<dbReference type="GlyCosmos" id="Q9D777">
    <property type="glycosylation" value="1 site, No reported glycans"/>
</dbReference>
<dbReference type="GlyGen" id="Q9D777">
    <property type="glycosylation" value="1 site"/>
</dbReference>
<dbReference type="PhosphoSitePlus" id="Q9D777"/>
<dbReference type="PaxDb" id="10090-ENSMUSP00000018896"/>
<dbReference type="DNASU" id="69583"/>
<dbReference type="GeneID" id="69583"/>
<dbReference type="KEGG" id="mmu:69583"/>
<dbReference type="UCSC" id="uc007jrd.1">
    <property type="organism name" value="mouse"/>
</dbReference>
<dbReference type="AGR" id="MGI:1916833"/>
<dbReference type="CTD" id="8741"/>
<dbReference type="MGI" id="MGI:1916833">
    <property type="gene designation" value="Tnfsf13"/>
</dbReference>
<dbReference type="eggNOG" id="ENOG502SAX4">
    <property type="taxonomic scope" value="Eukaryota"/>
</dbReference>
<dbReference type="InParanoid" id="Q9D777"/>
<dbReference type="OrthoDB" id="6159739at2759"/>
<dbReference type="PhylomeDB" id="Q9D777"/>
<dbReference type="Reactome" id="R-MMU-450520">
    <property type="pathway name" value="HuR (ELAVL1) binds and stabilizes mRNA"/>
</dbReference>
<dbReference type="Reactome" id="R-MMU-5669034">
    <property type="pathway name" value="TNFs bind their physiological receptors"/>
</dbReference>
<dbReference type="BioGRID-ORCS" id="69583">
    <property type="hits" value="3 hits in 113 CRISPR screens"/>
</dbReference>
<dbReference type="EvolutionaryTrace" id="Q9D777"/>
<dbReference type="PRO" id="PR:Q9D777"/>
<dbReference type="Proteomes" id="UP000000589">
    <property type="component" value="Unplaced"/>
</dbReference>
<dbReference type="RNAct" id="Q9D777">
    <property type="molecule type" value="protein"/>
</dbReference>
<dbReference type="GO" id="GO:0009897">
    <property type="term" value="C:external side of plasma membrane"/>
    <property type="evidence" value="ECO:0000314"/>
    <property type="project" value="MGI"/>
</dbReference>
<dbReference type="GO" id="GO:0005615">
    <property type="term" value="C:extracellular space"/>
    <property type="evidence" value="ECO:0007669"/>
    <property type="project" value="UniProtKB-KW"/>
</dbReference>
<dbReference type="GO" id="GO:0005125">
    <property type="term" value="F:cytokine activity"/>
    <property type="evidence" value="ECO:0007669"/>
    <property type="project" value="UniProtKB-KW"/>
</dbReference>
<dbReference type="GO" id="GO:0005164">
    <property type="term" value="F:tumor necrosis factor receptor binding"/>
    <property type="evidence" value="ECO:0007669"/>
    <property type="project" value="InterPro"/>
</dbReference>
<dbReference type="GO" id="GO:0002467">
    <property type="term" value="P:germinal center formation"/>
    <property type="evidence" value="ECO:0000315"/>
    <property type="project" value="MGI"/>
</dbReference>
<dbReference type="GO" id="GO:0016064">
    <property type="term" value="P:immunoglobulin mediated immune response"/>
    <property type="evidence" value="ECO:0000315"/>
    <property type="project" value="MGI"/>
</dbReference>
<dbReference type="GO" id="GO:0008284">
    <property type="term" value="P:positive regulation of cell population proliferation"/>
    <property type="evidence" value="ECO:0000314"/>
    <property type="project" value="MGI"/>
</dbReference>
<dbReference type="GO" id="GO:0002636">
    <property type="term" value="P:positive regulation of germinal center formation"/>
    <property type="evidence" value="ECO:0000315"/>
    <property type="project" value="MGI"/>
</dbReference>
<dbReference type="GO" id="GO:0048298">
    <property type="term" value="P:positive regulation of isotype switching to IgA isotypes"/>
    <property type="evidence" value="ECO:0000315"/>
    <property type="project" value="MGI"/>
</dbReference>
<dbReference type="GO" id="GO:0050776">
    <property type="term" value="P:regulation of immune response"/>
    <property type="evidence" value="ECO:0000315"/>
    <property type="project" value="MGI"/>
</dbReference>
<dbReference type="CDD" id="cd00184">
    <property type="entry name" value="TNF"/>
    <property type="match status" value="1"/>
</dbReference>
<dbReference type="FunFam" id="2.60.120.40:FF:000021">
    <property type="entry name" value="Tumor necrosis factor ligand superfamily member 13"/>
    <property type="match status" value="1"/>
</dbReference>
<dbReference type="Gene3D" id="2.60.120.40">
    <property type="match status" value="1"/>
</dbReference>
<dbReference type="InterPro" id="IPR021184">
    <property type="entry name" value="TNF_CS"/>
</dbReference>
<dbReference type="InterPro" id="IPR006052">
    <property type="entry name" value="TNF_dom"/>
</dbReference>
<dbReference type="InterPro" id="IPR051748">
    <property type="entry name" value="TNF_Ligand_Superfamily"/>
</dbReference>
<dbReference type="InterPro" id="IPR008983">
    <property type="entry name" value="Tumour_necrosis_fac-like_dom"/>
</dbReference>
<dbReference type="PANTHER" id="PTHR15151">
    <property type="entry name" value="PROTEIN EIGER"/>
    <property type="match status" value="1"/>
</dbReference>
<dbReference type="PANTHER" id="PTHR15151:SF12">
    <property type="entry name" value="TUMOR NECROSIS FACTOR LIGAND SUPERFAMILY MEMBER 13"/>
    <property type="match status" value="1"/>
</dbReference>
<dbReference type="Pfam" id="PF00229">
    <property type="entry name" value="TNF"/>
    <property type="match status" value="1"/>
</dbReference>
<dbReference type="SUPFAM" id="SSF49842">
    <property type="entry name" value="TNF-like"/>
    <property type="match status" value="1"/>
</dbReference>
<dbReference type="PROSITE" id="PS00251">
    <property type="entry name" value="THD_1"/>
    <property type="match status" value="1"/>
</dbReference>
<dbReference type="PROSITE" id="PS50049">
    <property type="entry name" value="THD_2"/>
    <property type="match status" value="1"/>
</dbReference>
<organism>
    <name type="scientific">Mus musculus</name>
    <name type="common">Mouse</name>
    <dbReference type="NCBI Taxonomy" id="10090"/>
    <lineage>
        <taxon>Eukaryota</taxon>
        <taxon>Metazoa</taxon>
        <taxon>Chordata</taxon>
        <taxon>Craniata</taxon>
        <taxon>Vertebrata</taxon>
        <taxon>Euteleostomi</taxon>
        <taxon>Mammalia</taxon>
        <taxon>Eutheria</taxon>
        <taxon>Euarchontoglires</taxon>
        <taxon>Glires</taxon>
        <taxon>Rodentia</taxon>
        <taxon>Myomorpha</taxon>
        <taxon>Muroidea</taxon>
        <taxon>Muridae</taxon>
        <taxon>Murinae</taxon>
        <taxon>Mus</taxon>
        <taxon>Mus</taxon>
    </lineage>
</organism>
<protein>
    <recommendedName>
        <fullName>Tumor necrosis factor ligand superfamily member 13</fullName>
    </recommendedName>
    <alternativeName>
        <fullName>A proliferation-inducing ligand</fullName>
        <shortName>APRIL</shortName>
    </alternativeName>
    <cdAntigenName>CD256</cdAntigenName>
</protein>
<keyword id="KW-0002">3D-structure</keyword>
<keyword id="KW-0165">Cleavage on pair of basic residues</keyword>
<keyword id="KW-0202">Cytokine</keyword>
<keyword id="KW-1015">Disulfide bond</keyword>
<keyword id="KW-0325">Glycoprotein</keyword>
<keyword id="KW-0391">Immunity</keyword>
<keyword id="KW-1185">Reference proteome</keyword>
<keyword id="KW-0964">Secreted</keyword>
<name>TNF13_MOUSE</name>
<evidence type="ECO:0000250" key="1"/>
<evidence type="ECO:0000255" key="2"/>
<evidence type="ECO:0000255" key="3">
    <source>
        <dbReference type="PROSITE-ProRule" id="PRU01387"/>
    </source>
</evidence>
<evidence type="ECO:0000269" key="4">
    <source>
    </source>
</evidence>
<evidence type="ECO:0000269" key="5">
    <source>
    </source>
</evidence>
<evidence type="ECO:0000305" key="6"/>
<evidence type="ECO:0000305" key="7">
    <source>
    </source>
</evidence>
<evidence type="ECO:0007829" key="8">
    <source>
        <dbReference type="PDB" id="1U5X"/>
    </source>
</evidence>
<evidence type="ECO:0007829" key="9">
    <source>
        <dbReference type="PDB" id="1XU1"/>
    </source>
</evidence>
<evidence type="ECO:0007829" key="10">
    <source>
        <dbReference type="PDB" id="1XU2"/>
    </source>
</evidence>
<accession>Q9D777</accession>
<accession>Q9ERP1</accession>
<gene>
    <name type="primary">Tnfsf13</name>
    <name type="synonym">April</name>
</gene>
<proteinExistence type="evidence at protein level"/>
<reference key="1">
    <citation type="journal article" date="2000" name="Nat. Immunol.">
        <title>APRIL and TALL-I and receptors BCMA and TACI: system for regulating humoral immunity.</title>
        <authorList>
            <person name="Yu G."/>
            <person name="Boone T."/>
            <person name="Delaney J."/>
            <person name="Hawkins N."/>
            <person name="Kelley M.J."/>
            <person name="Ramakrishnan M."/>
            <person name="McCabe S."/>
            <person name="Qiu W.R."/>
            <person name="Kornuc M."/>
            <person name="Xia X.-Z."/>
            <person name="Guo J."/>
            <person name="Stolina M."/>
            <person name="Boyle W.J."/>
            <person name="Sarosi I."/>
            <person name="Hsu H."/>
            <person name="Senaldi G."/>
            <person name="Theill L.E."/>
        </authorList>
    </citation>
    <scope>NUCLEOTIDE SEQUENCE [MRNA]</scope>
    <source>
        <tissue>Lung</tissue>
    </source>
</reference>
<reference key="2">
    <citation type="journal article" date="2005" name="Science">
        <title>The transcriptional landscape of the mammalian genome.</title>
        <authorList>
            <person name="Carninci P."/>
            <person name="Kasukawa T."/>
            <person name="Katayama S."/>
            <person name="Gough J."/>
            <person name="Frith M.C."/>
            <person name="Maeda N."/>
            <person name="Oyama R."/>
            <person name="Ravasi T."/>
            <person name="Lenhard B."/>
            <person name="Wells C."/>
            <person name="Kodzius R."/>
            <person name="Shimokawa K."/>
            <person name="Bajic V.B."/>
            <person name="Brenner S.E."/>
            <person name="Batalov S."/>
            <person name="Forrest A.R."/>
            <person name="Zavolan M."/>
            <person name="Davis M.J."/>
            <person name="Wilming L.G."/>
            <person name="Aidinis V."/>
            <person name="Allen J.E."/>
            <person name="Ambesi-Impiombato A."/>
            <person name="Apweiler R."/>
            <person name="Aturaliya R.N."/>
            <person name="Bailey T.L."/>
            <person name="Bansal M."/>
            <person name="Baxter L."/>
            <person name="Beisel K.W."/>
            <person name="Bersano T."/>
            <person name="Bono H."/>
            <person name="Chalk A.M."/>
            <person name="Chiu K.P."/>
            <person name="Choudhary V."/>
            <person name="Christoffels A."/>
            <person name="Clutterbuck D.R."/>
            <person name="Crowe M.L."/>
            <person name="Dalla E."/>
            <person name="Dalrymple B.P."/>
            <person name="de Bono B."/>
            <person name="Della Gatta G."/>
            <person name="di Bernardo D."/>
            <person name="Down T."/>
            <person name="Engstrom P."/>
            <person name="Fagiolini M."/>
            <person name="Faulkner G."/>
            <person name="Fletcher C.F."/>
            <person name="Fukushima T."/>
            <person name="Furuno M."/>
            <person name="Futaki S."/>
            <person name="Gariboldi M."/>
            <person name="Georgii-Hemming P."/>
            <person name="Gingeras T.R."/>
            <person name="Gojobori T."/>
            <person name="Green R.E."/>
            <person name="Gustincich S."/>
            <person name="Harbers M."/>
            <person name="Hayashi Y."/>
            <person name="Hensch T.K."/>
            <person name="Hirokawa N."/>
            <person name="Hill D."/>
            <person name="Huminiecki L."/>
            <person name="Iacono M."/>
            <person name="Ikeo K."/>
            <person name="Iwama A."/>
            <person name="Ishikawa T."/>
            <person name="Jakt M."/>
            <person name="Kanapin A."/>
            <person name="Katoh M."/>
            <person name="Kawasawa Y."/>
            <person name="Kelso J."/>
            <person name="Kitamura H."/>
            <person name="Kitano H."/>
            <person name="Kollias G."/>
            <person name="Krishnan S.P."/>
            <person name="Kruger A."/>
            <person name="Kummerfeld S.K."/>
            <person name="Kurochkin I.V."/>
            <person name="Lareau L.F."/>
            <person name="Lazarevic D."/>
            <person name="Lipovich L."/>
            <person name="Liu J."/>
            <person name="Liuni S."/>
            <person name="McWilliam S."/>
            <person name="Madan Babu M."/>
            <person name="Madera M."/>
            <person name="Marchionni L."/>
            <person name="Matsuda H."/>
            <person name="Matsuzawa S."/>
            <person name="Miki H."/>
            <person name="Mignone F."/>
            <person name="Miyake S."/>
            <person name="Morris K."/>
            <person name="Mottagui-Tabar S."/>
            <person name="Mulder N."/>
            <person name="Nakano N."/>
            <person name="Nakauchi H."/>
            <person name="Ng P."/>
            <person name="Nilsson R."/>
            <person name="Nishiguchi S."/>
            <person name="Nishikawa S."/>
            <person name="Nori F."/>
            <person name="Ohara O."/>
            <person name="Okazaki Y."/>
            <person name="Orlando V."/>
            <person name="Pang K.C."/>
            <person name="Pavan W.J."/>
            <person name="Pavesi G."/>
            <person name="Pesole G."/>
            <person name="Petrovsky N."/>
            <person name="Piazza S."/>
            <person name="Reed J."/>
            <person name="Reid J.F."/>
            <person name="Ring B.Z."/>
            <person name="Ringwald M."/>
            <person name="Rost B."/>
            <person name="Ruan Y."/>
            <person name="Salzberg S.L."/>
            <person name="Sandelin A."/>
            <person name="Schneider C."/>
            <person name="Schoenbach C."/>
            <person name="Sekiguchi K."/>
            <person name="Semple C.A."/>
            <person name="Seno S."/>
            <person name="Sessa L."/>
            <person name="Sheng Y."/>
            <person name="Shibata Y."/>
            <person name="Shimada H."/>
            <person name="Shimada K."/>
            <person name="Silva D."/>
            <person name="Sinclair B."/>
            <person name="Sperling S."/>
            <person name="Stupka E."/>
            <person name="Sugiura K."/>
            <person name="Sultana R."/>
            <person name="Takenaka Y."/>
            <person name="Taki K."/>
            <person name="Tammoja K."/>
            <person name="Tan S.L."/>
            <person name="Tang S."/>
            <person name="Taylor M.S."/>
            <person name="Tegner J."/>
            <person name="Teichmann S.A."/>
            <person name="Ueda H.R."/>
            <person name="van Nimwegen E."/>
            <person name="Verardo R."/>
            <person name="Wei C.L."/>
            <person name="Yagi K."/>
            <person name="Yamanishi H."/>
            <person name="Zabarovsky E."/>
            <person name="Zhu S."/>
            <person name="Zimmer A."/>
            <person name="Hide W."/>
            <person name="Bult C."/>
            <person name="Grimmond S.M."/>
            <person name="Teasdale R.D."/>
            <person name="Liu E.T."/>
            <person name="Brusic V."/>
            <person name="Quackenbush J."/>
            <person name="Wahlestedt C."/>
            <person name="Mattick J.S."/>
            <person name="Hume D.A."/>
            <person name="Kai C."/>
            <person name="Sasaki D."/>
            <person name="Tomaru Y."/>
            <person name="Fukuda S."/>
            <person name="Kanamori-Katayama M."/>
            <person name="Suzuki M."/>
            <person name="Aoki J."/>
            <person name="Arakawa T."/>
            <person name="Iida J."/>
            <person name="Imamura K."/>
            <person name="Itoh M."/>
            <person name="Kato T."/>
            <person name="Kawaji H."/>
            <person name="Kawagashira N."/>
            <person name="Kawashima T."/>
            <person name="Kojima M."/>
            <person name="Kondo S."/>
            <person name="Konno H."/>
            <person name="Nakano K."/>
            <person name="Ninomiya N."/>
            <person name="Nishio T."/>
            <person name="Okada M."/>
            <person name="Plessy C."/>
            <person name="Shibata K."/>
            <person name="Shiraki T."/>
            <person name="Suzuki S."/>
            <person name="Tagami M."/>
            <person name="Waki K."/>
            <person name="Watahiki A."/>
            <person name="Okamura-Oho Y."/>
            <person name="Suzuki H."/>
            <person name="Kawai J."/>
            <person name="Hayashizaki Y."/>
        </authorList>
    </citation>
    <scope>NUCLEOTIDE SEQUENCE [LARGE SCALE MRNA]</scope>
    <source>
        <strain>C57BL/6J</strain>
        <tissue>Tongue</tissue>
    </source>
</reference>
<reference key="3">
    <citation type="journal article" date="2004" name="Genome Res.">
        <title>The status, quality, and expansion of the NIH full-length cDNA project: the Mammalian Gene Collection (MGC).</title>
        <authorList>
            <consortium name="The MGC Project Team"/>
        </authorList>
    </citation>
    <scope>NUCLEOTIDE SEQUENCE [LARGE SCALE MRNA]</scope>
    <source>
        <strain>129</strain>
        <tissue>Mammary gland</tissue>
    </source>
</reference>
<reference key="4">
    <citation type="journal article" date="2004" name="Cancer Cell">
        <title>APRIL promotes B-1 cell-associated neoplasm.</title>
        <authorList>
            <person name="Planelles L."/>
            <person name="Carvalho-Pinto C.E."/>
            <person name="Hardenberg G."/>
            <person name="Smaniotto S."/>
            <person name="Savino W."/>
            <person name="Gomez-Caro R."/>
            <person name="Alvarez-Mon M."/>
            <person name="de Jong J."/>
            <person name="Eldering E."/>
            <person name="Martinez-A C."/>
            <person name="Medema J.P."/>
            <person name="Hahne M."/>
        </authorList>
    </citation>
    <scope>FUNCTION</scope>
    <scope>TRANSGENIC MICE</scope>
</reference>
<reference key="5">
    <citation type="journal article" date="2005" name="J. Biol. Chem.">
        <title>Structures of APRIL-receptor complexes: like BCMA, TACI employs only a single cysteine-rich domain for high affinity ligand binding.</title>
        <authorList>
            <person name="Hymowitz S.G."/>
            <person name="Patel D.R."/>
            <person name="Wallweber H.J."/>
            <person name="Runyon S."/>
            <person name="Yan M."/>
            <person name="Yin J."/>
            <person name="Shriver S.K."/>
            <person name="Gordon N.C."/>
            <person name="Pan B."/>
            <person name="Skelton N.J."/>
            <person name="Kelley R.F."/>
            <person name="Starovasnik M.A."/>
        </authorList>
    </citation>
    <scope>X-RAY CRYSTALLOGRAPHY (1.9 ANGSTROMS) OF 104-241 IN COMPLEX WITH HUMAN TNFRSF17</scope>
    <scope>DISULFIDE BONDS</scope>
</reference>
<feature type="propeptide" id="PRO_0000034526" evidence="1">
    <location>
        <begin position="1"/>
        <end position="95"/>
    </location>
</feature>
<feature type="chain" id="PRO_0000034527" description="Tumor necrosis factor ligand superfamily member 13">
    <location>
        <begin position="96"/>
        <end position="241"/>
    </location>
</feature>
<feature type="domain" description="THD" evidence="3">
    <location>
        <begin position="107"/>
        <end position="241"/>
    </location>
</feature>
<feature type="site" description="Cleavage; by furin" evidence="1">
    <location>
        <begin position="95"/>
        <end position="96"/>
    </location>
</feature>
<feature type="glycosylation site" description="N-linked (GlcNAc...) asparagine" evidence="2">
    <location>
        <position position="115"/>
    </location>
</feature>
<feature type="disulfide bond" evidence="3 5">
    <location>
        <begin position="187"/>
        <end position="202"/>
    </location>
</feature>
<feature type="sequence conflict" description="In Ref. 2; AAG22534." evidence="6" ref="2">
    <location>
        <position position="120"/>
    </location>
</feature>
<feature type="strand" evidence="8">
    <location>
        <begin position="108"/>
        <end position="117"/>
    </location>
</feature>
<feature type="turn" evidence="10">
    <location>
        <begin position="120"/>
        <end position="122"/>
    </location>
</feature>
<feature type="strand" evidence="8">
    <location>
        <begin position="125"/>
        <end position="142"/>
    </location>
</feature>
<feature type="strand" evidence="8">
    <location>
        <begin position="145"/>
        <end position="148"/>
    </location>
</feature>
<feature type="strand" evidence="8">
    <location>
        <begin position="152"/>
        <end position="162"/>
    </location>
</feature>
<feature type="strand" evidence="8">
    <location>
        <begin position="165"/>
        <end position="167"/>
    </location>
</feature>
<feature type="strand" evidence="8">
    <location>
        <begin position="172"/>
        <end position="176"/>
    </location>
</feature>
<feature type="strand" evidence="8">
    <location>
        <begin position="181"/>
        <end position="186"/>
    </location>
</feature>
<feature type="turn" evidence="9">
    <location>
        <begin position="195"/>
        <end position="197"/>
    </location>
</feature>
<feature type="strand" evidence="8">
    <location>
        <begin position="200"/>
        <end position="210"/>
    </location>
</feature>
<feature type="strand" evidence="8">
    <location>
        <begin position="215"/>
        <end position="222"/>
    </location>
</feature>
<feature type="turn" evidence="8">
    <location>
        <begin position="231"/>
        <end position="233"/>
    </location>
</feature>
<feature type="strand" evidence="8">
    <location>
        <begin position="234"/>
        <end position="240"/>
    </location>
</feature>
<sequence>MPASSPGHMGGSVREPALSVALWLSWGAVLGAVTCAVALLIQQTELQSLRREVSRLQRSGGPSQKQGERPWQSLWEQSPDVLEAWKDGAKSRRRRAVLTQKHKKKHSVLHLVPVNITSKADSDVTEVMWQPVLRRGRGLEAQGDIVRVWDTGIYLLYSQVLFHDVTFTMGQVVSREGQGRRETLFRCIRSMPSDPDRAYNSCYSAGVFHLHQGDIITVKIPRANAKLSLSPHGTFLGFVKL</sequence>
<comment type="function">
    <text evidence="4">Cytokine that binds to TNFRSF13B/TACI and to TNFRSF17/BCMA. Plays a role in the regulation of tumor cell growth. May be involved in monocyte/macrophage-mediated immunological processes.</text>
</comment>
<comment type="subunit">
    <text evidence="6">Homotrimer.</text>
</comment>
<comment type="subcellular location">
    <subcellularLocation>
        <location evidence="1">Secreted</location>
    </subcellularLocation>
</comment>
<comment type="PTM">
    <text>The soluble form derives from the membrane form by proteolytic processing.</text>
</comment>
<comment type="miscellaneous">
    <text evidence="7">Transgenic mice develop lymphoid tumors that originate from expansion of the peritoneal B-1 B-cell population. Aging transgenic mice develop progressive hyperplasia in mesenteric lymph nodes and Peyer patches, disorganization of affected lymphoid tissues, mucosal and capsular infiltration, and eventual tumor cell infiltration into non-lymphoid tissues such as kidney and liver (PubMed:15488762).</text>
</comment>
<comment type="similarity">
    <text evidence="6">Belongs to the tumor necrosis factor family.</text>
</comment>